<dbReference type="EC" id="7.1.1.2"/>
<dbReference type="EMBL" id="X12631">
    <property type="protein sequence ID" value="CAA31151.1"/>
    <property type="molecule type" value="Genomic_DNA"/>
</dbReference>
<dbReference type="PIR" id="S01499">
    <property type="entry name" value="S01499"/>
</dbReference>
<dbReference type="RefSeq" id="NP_006965.1">
    <property type="nucleotide sequence ID" value="NC_001453.1"/>
</dbReference>
<dbReference type="SMR" id="P15548"/>
<dbReference type="FunCoup" id="P15548">
    <property type="interactions" value="21"/>
</dbReference>
<dbReference type="STRING" id="7668.P15548"/>
<dbReference type="EnsemblMetazoa" id="GeneID_2652716_df_mr">
    <property type="protein sequence ID" value="NP_006965"/>
    <property type="gene ID" value="GeneID_2652716"/>
</dbReference>
<dbReference type="GeneID" id="2652716"/>
<dbReference type="KEGG" id="spu:2652716"/>
<dbReference type="CTD" id="4535"/>
<dbReference type="InParanoid" id="P15548"/>
<dbReference type="OMA" id="WSGWASN"/>
<dbReference type="OrthoDB" id="531329at2759"/>
<dbReference type="PhylomeDB" id="P15548"/>
<dbReference type="Proteomes" id="UP000007110">
    <property type="component" value="Unassembled WGS sequence"/>
</dbReference>
<dbReference type="GO" id="GO:0005743">
    <property type="term" value="C:mitochondrial inner membrane"/>
    <property type="evidence" value="ECO:0007669"/>
    <property type="project" value="UniProtKB-SubCell"/>
</dbReference>
<dbReference type="GO" id="GO:0045271">
    <property type="term" value="C:respiratory chain complex I"/>
    <property type="evidence" value="ECO:0000318"/>
    <property type="project" value="GO_Central"/>
</dbReference>
<dbReference type="GO" id="GO:0008137">
    <property type="term" value="F:NADH dehydrogenase (ubiquinone) activity"/>
    <property type="evidence" value="ECO:0007669"/>
    <property type="project" value="UniProtKB-EC"/>
</dbReference>
<dbReference type="GO" id="GO:0009060">
    <property type="term" value="P:aerobic respiration"/>
    <property type="evidence" value="ECO:0000318"/>
    <property type="project" value="GO_Central"/>
</dbReference>
<dbReference type="HAMAP" id="MF_01350">
    <property type="entry name" value="NDH1_NuoH"/>
    <property type="match status" value="1"/>
</dbReference>
<dbReference type="InterPro" id="IPR001694">
    <property type="entry name" value="NADH_UbQ_OxRdtase_su1/FPO"/>
</dbReference>
<dbReference type="InterPro" id="IPR018086">
    <property type="entry name" value="NADH_UbQ_OxRdtase_su1_CS"/>
</dbReference>
<dbReference type="PANTHER" id="PTHR11432">
    <property type="entry name" value="NADH DEHYDROGENASE SUBUNIT 1"/>
    <property type="match status" value="1"/>
</dbReference>
<dbReference type="PANTHER" id="PTHR11432:SF3">
    <property type="entry name" value="NADH-UBIQUINONE OXIDOREDUCTASE CHAIN 1"/>
    <property type="match status" value="1"/>
</dbReference>
<dbReference type="Pfam" id="PF00146">
    <property type="entry name" value="NADHdh"/>
    <property type="match status" value="1"/>
</dbReference>
<dbReference type="PROSITE" id="PS00667">
    <property type="entry name" value="COMPLEX1_ND1_1"/>
    <property type="match status" value="1"/>
</dbReference>
<dbReference type="PROSITE" id="PS00668">
    <property type="entry name" value="COMPLEX1_ND1_2"/>
    <property type="match status" value="1"/>
</dbReference>
<accession>P15548</accession>
<organism>
    <name type="scientific">Strongylocentrotus purpuratus</name>
    <name type="common">Purple sea urchin</name>
    <dbReference type="NCBI Taxonomy" id="7668"/>
    <lineage>
        <taxon>Eukaryota</taxon>
        <taxon>Metazoa</taxon>
        <taxon>Echinodermata</taxon>
        <taxon>Eleutherozoa</taxon>
        <taxon>Echinozoa</taxon>
        <taxon>Echinoidea</taxon>
        <taxon>Euechinoidea</taxon>
        <taxon>Echinacea</taxon>
        <taxon>Camarodonta</taxon>
        <taxon>Echinidea</taxon>
        <taxon>Strongylocentrotidae</taxon>
        <taxon>Strongylocentrotus</taxon>
    </lineage>
</organism>
<proteinExistence type="inferred from homology"/>
<reference key="1">
    <citation type="journal article" date="1988" name="J. Mol. Biol.">
        <title>Nucleotide sequence and gene organization of sea urchin mitochondrial DNA.</title>
        <authorList>
            <person name="Jacobs H.T."/>
            <person name="Elliott D.J."/>
            <person name="Math V.B."/>
            <person name="Farquharson A."/>
        </authorList>
    </citation>
    <scope>NUCLEOTIDE SEQUENCE [GENOMIC DNA]</scope>
</reference>
<comment type="function">
    <text evidence="1">Core subunit of the mitochondrial membrane respiratory chain NADH dehydrogenase (Complex I) that is believed to belong to the minimal assembly required for catalysis. Complex I functions in the transfer of electrons from NADH to the respiratory chain. The immediate electron acceptor for the enzyme is believed to be ubiquinone (By similarity).</text>
</comment>
<comment type="catalytic activity">
    <reaction>
        <text>a ubiquinone + NADH + 5 H(+)(in) = a ubiquinol + NAD(+) + 4 H(+)(out)</text>
        <dbReference type="Rhea" id="RHEA:29091"/>
        <dbReference type="Rhea" id="RHEA-COMP:9565"/>
        <dbReference type="Rhea" id="RHEA-COMP:9566"/>
        <dbReference type="ChEBI" id="CHEBI:15378"/>
        <dbReference type="ChEBI" id="CHEBI:16389"/>
        <dbReference type="ChEBI" id="CHEBI:17976"/>
        <dbReference type="ChEBI" id="CHEBI:57540"/>
        <dbReference type="ChEBI" id="CHEBI:57945"/>
        <dbReference type="EC" id="7.1.1.2"/>
    </reaction>
</comment>
<comment type="subcellular location">
    <subcellularLocation>
        <location evidence="1">Mitochondrion inner membrane</location>
        <topology evidence="1">Multi-pass membrane protein</topology>
    </subcellularLocation>
</comment>
<comment type="similarity">
    <text evidence="3">Belongs to the complex I subunit 1 family.</text>
</comment>
<keyword id="KW-0249">Electron transport</keyword>
<keyword id="KW-0472">Membrane</keyword>
<keyword id="KW-0496">Mitochondrion</keyword>
<keyword id="KW-0999">Mitochondrion inner membrane</keyword>
<keyword id="KW-0520">NAD</keyword>
<keyword id="KW-1185">Reference proteome</keyword>
<keyword id="KW-0679">Respiratory chain</keyword>
<keyword id="KW-1278">Translocase</keyword>
<keyword id="KW-0812">Transmembrane</keyword>
<keyword id="KW-1133">Transmembrane helix</keyword>
<keyword id="KW-0813">Transport</keyword>
<keyword id="KW-0830">Ubiquinone</keyword>
<protein>
    <recommendedName>
        <fullName>NADH-ubiquinone oxidoreductase chain 1</fullName>
        <ecNumber>7.1.1.2</ecNumber>
    </recommendedName>
    <alternativeName>
        <fullName>NADH dehydrogenase subunit 1</fullName>
    </alternativeName>
</protein>
<name>NU1M_STRPU</name>
<evidence type="ECO:0000250" key="1"/>
<evidence type="ECO:0000255" key="2"/>
<evidence type="ECO:0000305" key="3"/>
<sequence length="322" mass="35992">MVYVFSILELISFLIPILLSVAFLTLVERKVLGYMQFRNGPNVVGPFGLLQPFADGMKVFIKEELKPVNSSPYLFFFSPLLFLALALLLWNFMPVHTPTLDLQLSLLLVLGLSSLSVYAILGSGWASNSKYSLLGAIRAVAQTISYEISLALILLSLIIFSSSFNLTYIMNTQEFSWFSLSCLPLFYIWFVSTLAETNRAPFDLTEGESEIVSGYNVEYAGGPFVLFFIAEYANIILMNYFSVVLFLGGPSPLNNLFPISIIIVGIKTTFLFSVLWVRAAYPRFRYDQLMFLTWKSYLPLSIGALCAILALVALLGISLPLF</sequence>
<feature type="chain" id="PRO_0000117482" description="NADH-ubiquinone oxidoreductase chain 1">
    <location>
        <begin position="1"/>
        <end position="322"/>
    </location>
</feature>
<feature type="transmembrane region" description="Helical" evidence="2">
    <location>
        <begin position="4"/>
        <end position="24"/>
    </location>
</feature>
<feature type="transmembrane region" description="Helical" evidence="2">
    <location>
        <begin position="73"/>
        <end position="93"/>
    </location>
</feature>
<feature type="transmembrane region" description="Helical" evidence="2">
    <location>
        <begin position="106"/>
        <end position="126"/>
    </location>
</feature>
<feature type="transmembrane region" description="Helical" evidence="2">
    <location>
        <begin position="150"/>
        <end position="170"/>
    </location>
</feature>
<feature type="transmembrane region" description="Helical" evidence="2">
    <location>
        <begin position="175"/>
        <end position="195"/>
    </location>
</feature>
<feature type="transmembrane region" description="Helical" evidence="2">
    <location>
        <begin position="224"/>
        <end position="244"/>
    </location>
</feature>
<feature type="transmembrane region" description="Helical" evidence="2">
    <location>
        <begin position="257"/>
        <end position="277"/>
    </location>
</feature>
<feature type="transmembrane region" description="Helical" evidence="2">
    <location>
        <begin position="302"/>
        <end position="322"/>
    </location>
</feature>
<geneLocation type="mitochondrion"/>
<gene>
    <name type="primary">ND1</name>
</gene>